<keyword id="KW-0249">Electron transport</keyword>
<keyword id="KW-0349">Heme</keyword>
<keyword id="KW-0408">Iron</keyword>
<keyword id="KW-0472">Membrane</keyword>
<keyword id="KW-0479">Metal-binding</keyword>
<keyword id="KW-0496">Mitochondrion</keyword>
<keyword id="KW-0999">Mitochondrion inner membrane</keyword>
<keyword id="KW-0679">Respiratory chain</keyword>
<keyword id="KW-0812">Transmembrane</keyword>
<keyword id="KW-1133">Transmembrane helix</keyword>
<keyword id="KW-0813">Transport</keyword>
<keyword id="KW-0830">Ubiquinone</keyword>
<name>CYB_DAMLU</name>
<evidence type="ECO:0000250" key="1"/>
<evidence type="ECO:0000250" key="2">
    <source>
        <dbReference type="UniProtKB" id="P00157"/>
    </source>
</evidence>
<evidence type="ECO:0000255" key="3">
    <source>
        <dbReference type="PROSITE-ProRule" id="PRU00967"/>
    </source>
</evidence>
<evidence type="ECO:0000255" key="4">
    <source>
        <dbReference type="PROSITE-ProRule" id="PRU00968"/>
    </source>
</evidence>
<reference key="1">
    <citation type="journal article" date="1999" name="Mol. Phylogenet. Evol.">
        <title>Cytochrome b phylogeny of the family bovidae: resolution within the alcelaphini, antilopini, neotragini, and tragelaphini.</title>
        <authorList>
            <person name="Matthee C.A."/>
            <person name="Robinson T.J."/>
        </authorList>
    </citation>
    <scope>NUCLEOTIDE SEQUENCE [GENOMIC DNA]</scope>
</reference>
<accession>O47716</accession>
<comment type="function">
    <text evidence="2">Component of the ubiquinol-cytochrome c reductase complex (complex III or cytochrome b-c1 complex) that is part of the mitochondrial respiratory chain. The b-c1 complex mediates electron transfer from ubiquinol to cytochrome c. Contributes to the generation of a proton gradient across the mitochondrial membrane that is then used for ATP synthesis.</text>
</comment>
<comment type="cofactor">
    <cofactor evidence="2">
        <name>heme b</name>
        <dbReference type="ChEBI" id="CHEBI:60344"/>
    </cofactor>
    <text evidence="2">Binds 2 heme b groups non-covalently.</text>
</comment>
<comment type="subunit">
    <text evidence="2">The cytochrome bc1 complex contains 11 subunits: 3 respiratory subunits (MT-CYB, CYC1 and UQCRFS1), 2 core proteins (UQCRC1 and UQCRC2) and 6 low-molecular weight proteins (UQCRH/QCR6, UQCRB/QCR7, UQCRQ/QCR8, UQCR10/QCR9, UQCR11/QCR10 and a cleavage product of UQCRFS1). This cytochrome bc1 complex then forms a dimer.</text>
</comment>
<comment type="subcellular location">
    <subcellularLocation>
        <location evidence="2">Mitochondrion inner membrane</location>
        <topology evidence="2">Multi-pass membrane protein</topology>
    </subcellularLocation>
</comment>
<comment type="miscellaneous">
    <text evidence="1">Heme 1 (or BL or b562) is low-potential and absorbs at about 562 nm, and heme 2 (or BH or b566) is high-potential and absorbs at about 566 nm.</text>
</comment>
<comment type="similarity">
    <text evidence="3 4">Belongs to the cytochrome b family.</text>
</comment>
<comment type="caution">
    <text evidence="2">The full-length protein contains only eight transmembrane helices, not nine as predicted by bioinformatics tools.</text>
</comment>
<proteinExistence type="inferred from homology"/>
<protein>
    <recommendedName>
        <fullName>Cytochrome b</fullName>
    </recommendedName>
    <alternativeName>
        <fullName>Complex III subunit 3</fullName>
    </alternativeName>
    <alternativeName>
        <fullName>Complex III subunit III</fullName>
    </alternativeName>
    <alternativeName>
        <fullName>Cytochrome b-c1 complex subunit 3</fullName>
    </alternativeName>
    <alternativeName>
        <fullName>Ubiquinol-cytochrome-c reductase complex cytochrome b subunit</fullName>
    </alternativeName>
</protein>
<feature type="chain" id="PRO_0000060857" description="Cytochrome b">
    <location>
        <begin position="1"/>
        <end position="379"/>
    </location>
</feature>
<feature type="transmembrane region" description="Helical" evidence="2">
    <location>
        <begin position="33"/>
        <end position="53"/>
    </location>
</feature>
<feature type="transmembrane region" description="Helical" evidence="2">
    <location>
        <begin position="77"/>
        <end position="98"/>
    </location>
</feature>
<feature type="transmembrane region" description="Helical" evidence="2">
    <location>
        <begin position="113"/>
        <end position="133"/>
    </location>
</feature>
<feature type="transmembrane region" description="Helical" evidence="2">
    <location>
        <begin position="178"/>
        <end position="198"/>
    </location>
</feature>
<feature type="transmembrane region" description="Helical" evidence="2">
    <location>
        <begin position="226"/>
        <end position="246"/>
    </location>
</feature>
<feature type="transmembrane region" description="Helical" evidence="2">
    <location>
        <begin position="288"/>
        <end position="308"/>
    </location>
</feature>
<feature type="transmembrane region" description="Helical" evidence="2">
    <location>
        <begin position="320"/>
        <end position="340"/>
    </location>
</feature>
<feature type="transmembrane region" description="Helical" evidence="2">
    <location>
        <begin position="347"/>
        <end position="367"/>
    </location>
</feature>
<feature type="binding site" description="axial binding residue" evidence="2">
    <location>
        <position position="83"/>
    </location>
    <ligand>
        <name>heme b</name>
        <dbReference type="ChEBI" id="CHEBI:60344"/>
        <label>b562</label>
    </ligand>
    <ligandPart>
        <name>Fe</name>
        <dbReference type="ChEBI" id="CHEBI:18248"/>
    </ligandPart>
</feature>
<feature type="binding site" description="axial binding residue" evidence="2">
    <location>
        <position position="97"/>
    </location>
    <ligand>
        <name>heme b</name>
        <dbReference type="ChEBI" id="CHEBI:60344"/>
        <label>b566</label>
    </ligand>
    <ligandPart>
        <name>Fe</name>
        <dbReference type="ChEBI" id="CHEBI:18248"/>
    </ligandPart>
</feature>
<feature type="binding site" description="axial binding residue" evidence="2">
    <location>
        <position position="182"/>
    </location>
    <ligand>
        <name>heme b</name>
        <dbReference type="ChEBI" id="CHEBI:60344"/>
        <label>b562</label>
    </ligand>
    <ligandPart>
        <name>Fe</name>
        <dbReference type="ChEBI" id="CHEBI:18248"/>
    </ligandPart>
</feature>
<feature type="binding site" description="axial binding residue" evidence="2">
    <location>
        <position position="196"/>
    </location>
    <ligand>
        <name>heme b</name>
        <dbReference type="ChEBI" id="CHEBI:60344"/>
        <label>b566</label>
    </ligand>
    <ligandPart>
        <name>Fe</name>
        <dbReference type="ChEBI" id="CHEBI:18248"/>
    </ligandPart>
</feature>
<feature type="binding site" evidence="2">
    <location>
        <position position="201"/>
    </location>
    <ligand>
        <name>a ubiquinone</name>
        <dbReference type="ChEBI" id="CHEBI:16389"/>
    </ligand>
</feature>
<sequence length="379" mass="42694">MINIRKTHPLMKIINNAFIDLPAPSNISSWWNFGSLLGICLILQILTGLFLAMHYTSDTMTAFSSVTHICRDVNYGWIIRYMHANGASMFFICLFLHVGRGLYYGSYIFLETWNVGVVLLFATMATAFMGYVLPWGQMSFWGATVITNLLSAIPYIGTNLVEWIWGGFSVDKATLTRFFAFHFIFPFIIVALAMVHLLFLHETGSNNPTGISSDADKIPFHPYYTIKDALGALLLILALMLLVLFAPDLLGDPDNYTPANPLNTPPHIKPEWYFLFAYAILRSIPNELGGVLALVLSILILVLMPLLHTSKQRSTMFRPISQCMFWILVADLLTLTWIGGQPVEHPYIIIGQLASIMYFLLILVLMPMASTIENNLPKW</sequence>
<organism>
    <name type="scientific">Damaliscus lunatus</name>
    <name type="common">Tsessebe</name>
    <name type="synonym">Topi</name>
    <dbReference type="NCBI Taxonomy" id="9929"/>
    <lineage>
        <taxon>Eukaryota</taxon>
        <taxon>Metazoa</taxon>
        <taxon>Chordata</taxon>
        <taxon>Craniata</taxon>
        <taxon>Vertebrata</taxon>
        <taxon>Euteleostomi</taxon>
        <taxon>Mammalia</taxon>
        <taxon>Eutheria</taxon>
        <taxon>Laurasiatheria</taxon>
        <taxon>Artiodactyla</taxon>
        <taxon>Ruminantia</taxon>
        <taxon>Pecora</taxon>
        <taxon>Bovidae</taxon>
        <taxon>Alcelaphinae</taxon>
        <taxon>Damaliscus</taxon>
    </lineage>
</organism>
<gene>
    <name type="primary">MT-CYB</name>
    <name type="synonym">COB</name>
    <name type="synonym">CYTB</name>
    <name type="synonym">MTCYB</name>
</gene>
<dbReference type="EMBL" id="AF016635">
    <property type="protein sequence ID" value="AAD13478.1"/>
    <property type="molecule type" value="Genomic_DNA"/>
</dbReference>
<dbReference type="SMR" id="O47716"/>
<dbReference type="GO" id="GO:0005743">
    <property type="term" value="C:mitochondrial inner membrane"/>
    <property type="evidence" value="ECO:0007669"/>
    <property type="project" value="UniProtKB-SubCell"/>
</dbReference>
<dbReference type="GO" id="GO:0045275">
    <property type="term" value="C:respiratory chain complex III"/>
    <property type="evidence" value="ECO:0007669"/>
    <property type="project" value="InterPro"/>
</dbReference>
<dbReference type="GO" id="GO:0046872">
    <property type="term" value="F:metal ion binding"/>
    <property type="evidence" value="ECO:0007669"/>
    <property type="project" value="UniProtKB-KW"/>
</dbReference>
<dbReference type="GO" id="GO:0008121">
    <property type="term" value="F:ubiquinol-cytochrome-c reductase activity"/>
    <property type="evidence" value="ECO:0007669"/>
    <property type="project" value="InterPro"/>
</dbReference>
<dbReference type="GO" id="GO:0006122">
    <property type="term" value="P:mitochondrial electron transport, ubiquinol to cytochrome c"/>
    <property type="evidence" value="ECO:0007669"/>
    <property type="project" value="TreeGrafter"/>
</dbReference>
<dbReference type="CDD" id="cd00290">
    <property type="entry name" value="cytochrome_b_C"/>
    <property type="match status" value="1"/>
</dbReference>
<dbReference type="CDD" id="cd00284">
    <property type="entry name" value="Cytochrome_b_N"/>
    <property type="match status" value="1"/>
</dbReference>
<dbReference type="FunFam" id="1.20.810.10:FF:000002">
    <property type="entry name" value="Cytochrome b"/>
    <property type="match status" value="1"/>
</dbReference>
<dbReference type="Gene3D" id="1.20.810.10">
    <property type="entry name" value="Cytochrome Bc1 Complex, Chain C"/>
    <property type="match status" value="1"/>
</dbReference>
<dbReference type="InterPro" id="IPR005798">
    <property type="entry name" value="Cyt_b/b6_C"/>
</dbReference>
<dbReference type="InterPro" id="IPR036150">
    <property type="entry name" value="Cyt_b/b6_C_sf"/>
</dbReference>
<dbReference type="InterPro" id="IPR005797">
    <property type="entry name" value="Cyt_b/b6_N"/>
</dbReference>
<dbReference type="InterPro" id="IPR027387">
    <property type="entry name" value="Cytb/b6-like_sf"/>
</dbReference>
<dbReference type="InterPro" id="IPR030689">
    <property type="entry name" value="Cytochrome_b"/>
</dbReference>
<dbReference type="InterPro" id="IPR048260">
    <property type="entry name" value="Cytochrome_b_C_euk/bac"/>
</dbReference>
<dbReference type="InterPro" id="IPR048259">
    <property type="entry name" value="Cytochrome_b_N_euk/bac"/>
</dbReference>
<dbReference type="InterPro" id="IPR016174">
    <property type="entry name" value="Di-haem_cyt_TM"/>
</dbReference>
<dbReference type="PANTHER" id="PTHR19271">
    <property type="entry name" value="CYTOCHROME B"/>
    <property type="match status" value="1"/>
</dbReference>
<dbReference type="PANTHER" id="PTHR19271:SF16">
    <property type="entry name" value="CYTOCHROME B"/>
    <property type="match status" value="1"/>
</dbReference>
<dbReference type="Pfam" id="PF00032">
    <property type="entry name" value="Cytochrom_B_C"/>
    <property type="match status" value="1"/>
</dbReference>
<dbReference type="Pfam" id="PF00033">
    <property type="entry name" value="Cytochrome_B"/>
    <property type="match status" value="1"/>
</dbReference>
<dbReference type="PIRSF" id="PIRSF038885">
    <property type="entry name" value="COB"/>
    <property type="match status" value="1"/>
</dbReference>
<dbReference type="SUPFAM" id="SSF81648">
    <property type="entry name" value="a domain/subunit of cytochrome bc1 complex (Ubiquinol-cytochrome c reductase)"/>
    <property type="match status" value="1"/>
</dbReference>
<dbReference type="SUPFAM" id="SSF81342">
    <property type="entry name" value="Transmembrane di-heme cytochromes"/>
    <property type="match status" value="1"/>
</dbReference>
<dbReference type="PROSITE" id="PS51003">
    <property type="entry name" value="CYTB_CTER"/>
    <property type="match status" value="1"/>
</dbReference>
<dbReference type="PROSITE" id="PS51002">
    <property type="entry name" value="CYTB_NTER"/>
    <property type="match status" value="1"/>
</dbReference>
<geneLocation type="mitochondrion"/>